<evidence type="ECO:0000255" key="1">
    <source>
        <dbReference type="HAMAP-Rule" id="MF_01209"/>
    </source>
</evidence>
<dbReference type="EC" id="6.3.5.5" evidence="1"/>
<dbReference type="EMBL" id="BX294141">
    <property type="protein sequence ID" value="CAD78333.1"/>
    <property type="molecule type" value="Genomic_DNA"/>
</dbReference>
<dbReference type="RefSeq" id="NP_866552.1">
    <property type="nucleotide sequence ID" value="NC_005027.1"/>
</dbReference>
<dbReference type="SMR" id="Q7UGJ6"/>
<dbReference type="FunCoup" id="Q7UGJ6">
    <property type="interactions" value="575"/>
</dbReference>
<dbReference type="STRING" id="243090.RB5179"/>
<dbReference type="EnsemblBacteria" id="CAD78333">
    <property type="protein sequence ID" value="CAD78333"/>
    <property type="gene ID" value="RB5179"/>
</dbReference>
<dbReference type="KEGG" id="rba:RB5179"/>
<dbReference type="PATRIC" id="fig|243090.15.peg.2480"/>
<dbReference type="eggNOG" id="COG0505">
    <property type="taxonomic scope" value="Bacteria"/>
</dbReference>
<dbReference type="HOGENOM" id="CLU_035901_2_1_0"/>
<dbReference type="InParanoid" id="Q7UGJ6"/>
<dbReference type="OrthoDB" id="9804328at2"/>
<dbReference type="UniPathway" id="UPA00068">
    <property type="reaction ID" value="UER00171"/>
</dbReference>
<dbReference type="UniPathway" id="UPA00070">
    <property type="reaction ID" value="UER00115"/>
</dbReference>
<dbReference type="Proteomes" id="UP000001025">
    <property type="component" value="Chromosome"/>
</dbReference>
<dbReference type="GO" id="GO:0005951">
    <property type="term" value="C:carbamoyl-phosphate synthase complex"/>
    <property type="evidence" value="ECO:0000318"/>
    <property type="project" value="GO_Central"/>
</dbReference>
<dbReference type="GO" id="GO:0005737">
    <property type="term" value="C:cytoplasm"/>
    <property type="evidence" value="ECO:0000318"/>
    <property type="project" value="GO_Central"/>
</dbReference>
<dbReference type="GO" id="GO:0005524">
    <property type="term" value="F:ATP binding"/>
    <property type="evidence" value="ECO:0007669"/>
    <property type="project" value="UniProtKB-UniRule"/>
</dbReference>
<dbReference type="GO" id="GO:0004088">
    <property type="term" value="F:carbamoyl-phosphate synthase (glutamine-hydrolyzing) activity"/>
    <property type="evidence" value="ECO:0007669"/>
    <property type="project" value="UniProtKB-UniRule"/>
</dbReference>
<dbReference type="GO" id="GO:0004359">
    <property type="term" value="F:glutaminase activity"/>
    <property type="evidence" value="ECO:0007669"/>
    <property type="project" value="RHEA"/>
</dbReference>
<dbReference type="GO" id="GO:0006207">
    <property type="term" value="P:'de novo' pyrimidine nucleobase biosynthetic process"/>
    <property type="evidence" value="ECO:0007669"/>
    <property type="project" value="InterPro"/>
</dbReference>
<dbReference type="GO" id="GO:0044205">
    <property type="term" value="P:'de novo' UMP biosynthetic process"/>
    <property type="evidence" value="ECO:0007669"/>
    <property type="project" value="UniProtKB-UniRule"/>
</dbReference>
<dbReference type="GO" id="GO:0006541">
    <property type="term" value="P:glutamine metabolic process"/>
    <property type="evidence" value="ECO:0007669"/>
    <property type="project" value="InterPro"/>
</dbReference>
<dbReference type="GO" id="GO:0006526">
    <property type="term" value="P:L-arginine biosynthetic process"/>
    <property type="evidence" value="ECO:0000318"/>
    <property type="project" value="GO_Central"/>
</dbReference>
<dbReference type="CDD" id="cd01744">
    <property type="entry name" value="GATase1_CPSase"/>
    <property type="match status" value="1"/>
</dbReference>
<dbReference type="FunFam" id="3.40.50.880:FF:000029">
    <property type="entry name" value="Carbamoyl-phosphate synthase small chain"/>
    <property type="match status" value="1"/>
</dbReference>
<dbReference type="FunFam" id="3.50.30.20:FF:000001">
    <property type="entry name" value="Carbamoyl-phosphate synthase small chain"/>
    <property type="match status" value="1"/>
</dbReference>
<dbReference type="Gene3D" id="3.40.50.880">
    <property type="match status" value="1"/>
</dbReference>
<dbReference type="Gene3D" id="3.50.30.20">
    <property type="entry name" value="Carbamoyl-phosphate synthase small subunit, N-terminal domain"/>
    <property type="match status" value="1"/>
</dbReference>
<dbReference type="HAMAP" id="MF_01209">
    <property type="entry name" value="CPSase_S_chain"/>
    <property type="match status" value="1"/>
</dbReference>
<dbReference type="InterPro" id="IPR050472">
    <property type="entry name" value="Anth_synth/Amidotransfase"/>
</dbReference>
<dbReference type="InterPro" id="IPR006274">
    <property type="entry name" value="CarbamoylP_synth_ssu"/>
</dbReference>
<dbReference type="InterPro" id="IPR002474">
    <property type="entry name" value="CarbamoylP_synth_ssu_N"/>
</dbReference>
<dbReference type="InterPro" id="IPR036480">
    <property type="entry name" value="CarbP_synth_ssu_N_sf"/>
</dbReference>
<dbReference type="InterPro" id="IPR029062">
    <property type="entry name" value="Class_I_gatase-like"/>
</dbReference>
<dbReference type="InterPro" id="IPR035686">
    <property type="entry name" value="CPSase_GATase1"/>
</dbReference>
<dbReference type="InterPro" id="IPR017926">
    <property type="entry name" value="GATASE"/>
</dbReference>
<dbReference type="NCBIfam" id="TIGR01368">
    <property type="entry name" value="CPSaseIIsmall"/>
    <property type="match status" value="1"/>
</dbReference>
<dbReference type="NCBIfam" id="NF009475">
    <property type="entry name" value="PRK12838.1"/>
    <property type="match status" value="1"/>
</dbReference>
<dbReference type="PANTHER" id="PTHR43418:SF7">
    <property type="entry name" value="CARBAMOYL-PHOSPHATE SYNTHASE SMALL CHAIN"/>
    <property type="match status" value="1"/>
</dbReference>
<dbReference type="PANTHER" id="PTHR43418">
    <property type="entry name" value="MULTIFUNCTIONAL TRYPTOPHAN BIOSYNTHESIS PROTEIN-RELATED"/>
    <property type="match status" value="1"/>
</dbReference>
<dbReference type="Pfam" id="PF00988">
    <property type="entry name" value="CPSase_sm_chain"/>
    <property type="match status" value="1"/>
</dbReference>
<dbReference type="Pfam" id="PF00117">
    <property type="entry name" value="GATase"/>
    <property type="match status" value="1"/>
</dbReference>
<dbReference type="PRINTS" id="PR00097">
    <property type="entry name" value="ANTSNTHASEII"/>
</dbReference>
<dbReference type="PRINTS" id="PR00099">
    <property type="entry name" value="CPSGATASE"/>
</dbReference>
<dbReference type="PRINTS" id="PR00096">
    <property type="entry name" value="GATASE"/>
</dbReference>
<dbReference type="SMART" id="SM01097">
    <property type="entry name" value="CPSase_sm_chain"/>
    <property type="match status" value="1"/>
</dbReference>
<dbReference type="SUPFAM" id="SSF52021">
    <property type="entry name" value="Carbamoyl phosphate synthetase, small subunit N-terminal domain"/>
    <property type="match status" value="1"/>
</dbReference>
<dbReference type="SUPFAM" id="SSF52317">
    <property type="entry name" value="Class I glutamine amidotransferase-like"/>
    <property type="match status" value="1"/>
</dbReference>
<dbReference type="PROSITE" id="PS51273">
    <property type="entry name" value="GATASE_TYPE_1"/>
    <property type="match status" value="1"/>
</dbReference>
<feature type="chain" id="PRO_0000227026" description="Carbamoyl phosphate synthase small chain">
    <location>
        <begin position="1"/>
        <end position="389"/>
    </location>
</feature>
<feature type="domain" description="Glutamine amidotransferase type-1" evidence="1">
    <location>
        <begin position="201"/>
        <end position="387"/>
    </location>
</feature>
<feature type="region of interest" description="CPSase" evidence="1">
    <location>
        <begin position="1"/>
        <end position="197"/>
    </location>
</feature>
<feature type="active site" description="Nucleophile" evidence="1">
    <location>
        <position position="276"/>
    </location>
</feature>
<feature type="active site" evidence="1">
    <location>
        <position position="360"/>
    </location>
</feature>
<feature type="active site" evidence="1">
    <location>
        <position position="362"/>
    </location>
</feature>
<feature type="binding site" evidence="1">
    <location>
        <position position="51"/>
    </location>
    <ligand>
        <name>L-glutamine</name>
        <dbReference type="ChEBI" id="CHEBI:58359"/>
    </ligand>
</feature>
<feature type="binding site" evidence="1">
    <location>
        <position position="249"/>
    </location>
    <ligand>
        <name>L-glutamine</name>
        <dbReference type="ChEBI" id="CHEBI:58359"/>
    </ligand>
</feature>
<feature type="binding site" evidence="1">
    <location>
        <position position="251"/>
    </location>
    <ligand>
        <name>L-glutamine</name>
        <dbReference type="ChEBI" id="CHEBI:58359"/>
    </ligand>
</feature>
<feature type="binding site" evidence="1">
    <location>
        <position position="277"/>
    </location>
    <ligand>
        <name>L-glutamine</name>
        <dbReference type="ChEBI" id="CHEBI:58359"/>
    </ligand>
</feature>
<feature type="binding site" evidence="1">
    <location>
        <position position="280"/>
    </location>
    <ligand>
        <name>L-glutamine</name>
        <dbReference type="ChEBI" id="CHEBI:58359"/>
    </ligand>
</feature>
<feature type="binding site" evidence="1">
    <location>
        <position position="318"/>
    </location>
    <ligand>
        <name>L-glutamine</name>
        <dbReference type="ChEBI" id="CHEBI:58359"/>
    </ligand>
</feature>
<feature type="binding site" evidence="1">
    <location>
        <position position="320"/>
    </location>
    <ligand>
        <name>L-glutamine</name>
        <dbReference type="ChEBI" id="CHEBI:58359"/>
    </ligand>
</feature>
<feature type="binding site" evidence="1">
    <location>
        <position position="321"/>
    </location>
    <ligand>
        <name>L-glutamine</name>
        <dbReference type="ChEBI" id="CHEBI:58359"/>
    </ligand>
</feature>
<accession>Q7UGJ6</accession>
<protein>
    <recommendedName>
        <fullName evidence="1">Carbamoyl phosphate synthase small chain</fullName>
        <ecNumber evidence="1">6.3.5.5</ecNumber>
    </recommendedName>
    <alternativeName>
        <fullName evidence="1">Carbamoyl phosphate synthetase glutamine chain</fullName>
    </alternativeName>
</protein>
<sequence>MMSSPAKAAKLALEDGTVYTGTSLGAEGETTGEVVFNTSMTGYQEILTDPSYRGQLVTMTYPEMGNYGINSIDLENRGTSLAGFIIRNESRMHSNYRSEGSLSDYLNSQGVVGIAGIDTRALVRRIRSEGAMRGVLSTTDLDDASLVAKAKASPGLVGRDLVQEVMPTQLEKWTNELDDWTIREIREAAKDASIGDDSRPHVVCMDFGMKWNIPRHLRSRGNRVTIVPGNASADDILKMDPDGVFLSNGPGDPEPLTYAHKAIGELLGQVPVFGICLGHQLLSVACGAKTFKLKFGHRGANQPVLDLETGKVEITSQNHGFAVDDQGLPDCLEVTHRNLNDDTIAGVRHKDTGAFAVQYHPEAAAGPHDSHYLFSRFQEQLNEKCGVTA</sequence>
<comment type="function">
    <text evidence="1">Small subunit of the glutamine-dependent carbamoyl phosphate synthetase (CPSase). CPSase catalyzes the formation of carbamoyl phosphate from the ammonia moiety of glutamine, carbonate, and phosphate donated by ATP, constituting the first step of 2 biosynthetic pathways, one leading to arginine and/or urea and the other to pyrimidine nucleotides. The small subunit (glutamine amidotransferase) binds and cleaves glutamine to supply the large subunit with the substrate ammonia.</text>
</comment>
<comment type="catalytic activity">
    <reaction evidence="1">
        <text>hydrogencarbonate + L-glutamine + 2 ATP + H2O = carbamoyl phosphate + L-glutamate + 2 ADP + phosphate + 2 H(+)</text>
        <dbReference type="Rhea" id="RHEA:18633"/>
        <dbReference type="ChEBI" id="CHEBI:15377"/>
        <dbReference type="ChEBI" id="CHEBI:15378"/>
        <dbReference type="ChEBI" id="CHEBI:17544"/>
        <dbReference type="ChEBI" id="CHEBI:29985"/>
        <dbReference type="ChEBI" id="CHEBI:30616"/>
        <dbReference type="ChEBI" id="CHEBI:43474"/>
        <dbReference type="ChEBI" id="CHEBI:58228"/>
        <dbReference type="ChEBI" id="CHEBI:58359"/>
        <dbReference type="ChEBI" id="CHEBI:456216"/>
        <dbReference type="EC" id="6.3.5.5"/>
    </reaction>
</comment>
<comment type="catalytic activity">
    <molecule>Carbamoyl phosphate synthase small chain</molecule>
    <reaction evidence="1">
        <text>L-glutamine + H2O = L-glutamate + NH4(+)</text>
        <dbReference type="Rhea" id="RHEA:15889"/>
        <dbReference type="ChEBI" id="CHEBI:15377"/>
        <dbReference type="ChEBI" id="CHEBI:28938"/>
        <dbReference type="ChEBI" id="CHEBI:29985"/>
        <dbReference type="ChEBI" id="CHEBI:58359"/>
    </reaction>
</comment>
<comment type="pathway">
    <text evidence="1">Amino-acid biosynthesis; L-arginine biosynthesis; carbamoyl phosphate from bicarbonate: step 1/1.</text>
</comment>
<comment type="pathway">
    <text evidence="1">Pyrimidine metabolism; UMP biosynthesis via de novo pathway; (S)-dihydroorotate from bicarbonate: step 1/3.</text>
</comment>
<comment type="subunit">
    <text evidence="1">Composed of two chains; the small (or glutamine) chain promotes the hydrolysis of glutamine to ammonia, which is used by the large (or ammonia) chain to synthesize carbamoyl phosphate. Tetramer of heterodimers (alpha,beta)4.</text>
</comment>
<comment type="similarity">
    <text evidence="1">Belongs to the CarA family.</text>
</comment>
<keyword id="KW-0028">Amino-acid biosynthesis</keyword>
<keyword id="KW-0055">Arginine biosynthesis</keyword>
<keyword id="KW-0067">ATP-binding</keyword>
<keyword id="KW-0315">Glutamine amidotransferase</keyword>
<keyword id="KW-0436">Ligase</keyword>
<keyword id="KW-0547">Nucleotide-binding</keyword>
<keyword id="KW-0665">Pyrimidine biosynthesis</keyword>
<keyword id="KW-1185">Reference proteome</keyword>
<gene>
    <name evidence="1" type="primary">carA</name>
    <name type="ordered locus">RB5179</name>
</gene>
<organism>
    <name type="scientific">Rhodopirellula baltica (strain DSM 10527 / NCIMB 13988 / SH1)</name>
    <dbReference type="NCBI Taxonomy" id="243090"/>
    <lineage>
        <taxon>Bacteria</taxon>
        <taxon>Pseudomonadati</taxon>
        <taxon>Planctomycetota</taxon>
        <taxon>Planctomycetia</taxon>
        <taxon>Pirellulales</taxon>
        <taxon>Pirellulaceae</taxon>
        <taxon>Rhodopirellula</taxon>
    </lineage>
</organism>
<proteinExistence type="inferred from homology"/>
<reference key="1">
    <citation type="journal article" date="2003" name="Proc. Natl. Acad. Sci. U.S.A.">
        <title>Complete genome sequence of the marine planctomycete Pirellula sp. strain 1.</title>
        <authorList>
            <person name="Gloeckner F.O."/>
            <person name="Kube M."/>
            <person name="Bauer M."/>
            <person name="Teeling H."/>
            <person name="Lombardot T."/>
            <person name="Ludwig W."/>
            <person name="Gade D."/>
            <person name="Beck A."/>
            <person name="Borzym K."/>
            <person name="Heitmann K."/>
            <person name="Rabus R."/>
            <person name="Schlesner H."/>
            <person name="Amann R."/>
            <person name="Reinhardt R."/>
        </authorList>
    </citation>
    <scope>NUCLEOTIDE SEQUENCE [LARGE SCALE GENOMIC DNA]</scope>
    <source>
        <strain>DSM 10527 / NCIMB 13988 / SH1</strain>
    </source>
</reference>
<name>CARA_RHOBA</name>